<keyword id="KW-0413">Isomerase</keyword>
<name>UXAC_BACFR</name>
<reference key="1">
    <citation type="journal article" date="2004" name="Proc. Natl. Acad. Sci. U.S.A.">
        <title>Genomic analysis of Bacteroides fragilis reveals extensive DNA inversions regulating cell surface adaptation.</title>
        <authorList>
            <person name="Kuwahara T."/>
            <person name="Yamashita A."/>
            <person name="Hirakawa H."/>
            <person name="Nakayama H."/>
            <person name="Toh H."/>
            <person name="Okada N."/>
            <person name="Kuhara S."/>
            <person name="Hattori M."/>
            <person name="Hayashi T."/>
            <person name="Ohnishi Y."/>
        </authorList>
    </citation>
    <scope>NUCLEOTIDE SEQUENCE [LARGE SCALE GENOMIC DNA]</scope>
    <source>
        <strain>YCH46</strain>
    </source>
</reference>
<comment type="catalytic activity">
    <reaction evidence="1">
        <text>D-glucuronate = D-fructuronate</text>
        <dbReference type="Rhea" id="RHEA:13049"/>
        <dbReference type="ChEBI" id="CHEBI:58720"/>
        <dbReference type="ChEBI" id="CHEBI:59863"/>
        <dbReference type="EC" id="5.3.1.12"/>
    </reaction>
</comment>
<comment type="catalytic activity">
    <reaction evidence="1">
        <text>aldehydo-D-galacturonate = keto-D-tagaturonate</text>
        <dbReference type="Rhea" id="RHEA:27702"/>
        <dbReference type="ChEBI" id="CHEBI:12952"/>
        <dbReference type="ChEBI" id="CHEBI:17886"/>
        <dbReference type="EC" id="5.3.1.12"/>
    </reaction>
</comment>
<comment type="pathway">
    <text evidence="1">Carbohydrate metabolism; pentose and glucuronate interconversion.</text>
</comment>
<comment type="similarity">
    <text evidence="1">Belongs to the metallo-dependent hydrolases superfamily. Uronate isomerase family.</text>
</comment>
<accession>Q64TY9</accession>
<gene>
    <name evidence="1" type="primary">uxaC</name>
    <name type="ordered locus">BF2293</name>
</gene>
<sequence>MKNFMDKNFLLQTETAQELYHNHAAKMPIIDYHCHLNPQMVADDYRFKSLTEIWLGGDHYKWRAMRSNGVDECFCTGKETSDWEKFEKWAETVPYTFRNPLYHWTHLELKTAFGIDKVLNPKTAREIYDECNEKLSSQEYSARGMMRRYHVETVCTTDDPIDSLEYHIRTRESGFEIKMLPTWRPDKVMAVEVPSDFRTYIEKLSEISEITISDYNDMILALRKRHDYFAEQGCKLSDHGIEEFYAEDYTEGEIKTIFNKIYGGSELTKEEVLKFKSAMLIVLGEMDWEKGWTQQFHYGAIRNNNSRMFKQLGPDTGFDSIGEFATAKAMSKFLDRLNSKGKLTKTILYNLNPCANEVIATMIGNFQDGSIPGKIQFGSGWWFLDQKDGMERQLNALSLLGLLSRFVGMLTDSRSFLSYPRHEYFRRTLCNLLGCDVENGEIPLSEMERVCQMVEDISYFNAKNFFHF</sequence>
<organism>
    <name type="scientific">Bacteroides fragilis (strain YCH46)</name>
    <dbReference type="NCBI Taxonomy" id="295405"/>
    <lineage>
        <taxon>Bacteria</taxon>
        <taxon>Pseudomonadati</taxon>
        <taxon>Bacteroidota</taxon>
        <taxon>Bacteroidia</taxon>
        <taxon>Bacteroidales</taxon>
        <taxon>Bacteroidaceae</taxon>
        <taxon>Bacteroides</taxon>
    </lineage>
</organism>
<dbReference type="EC" id="5.3.1.12" evidence="1"/>
<dbReference type="EMBL" id="AP006841">
    <property type="protein sequence ID" value="BAD49040.1"/>
    <property type="molecule type" value="Genomic_DNA"/>
</dbReference>
<dbReference type="RefSeq" id="WP_005793937.1">
    <property type="nucleotide sequence ID" value="NC_006347.1"/>
</dbReference>
<dbReference type="RefSeq" id="YP_099574.1">
    <property type="nucleotide sequence ID" value="NC_006347.1"/>
</dbReference>
<dbReference type="SMR" id="Q64TY9"/>
<dbReference type="STRING" id="295405.BF2293"/>
<dbReference type="GeneID" id="60368070"/>
<dbReference type="KEGG" id="bfr:BF2293"/>
<dbReference type="PATRIC" id="fig|295405.11.peg.2222"/>
<dbReference type="HOGENOM" id="CLU_044465_1_0_10"/>
<dbReference type="OrthoDB" id="9766564at2"/>
<dbReference type="UniPathway" id="UPA00246"/>
<dbReference type="Proteomes" id="UP000002197">
    <property type="component" value="Chromosome"/>
</dbReference>
<dbReference type="GO" id="GO:0008880">
    <property type="term" value="F:glucuronate isomerase activity"/>
    <property type="evidence" value="ECO:0007669"/>
    <property type="project" value="UniProtKB-UniRule"/>
</dbReference>
<dbReference type="GO" id="GO:0019698">
    <property type="term" value="P:D-galacturonate catabolic process"/>
    <property type="evidence" value="ECO:0007669"/>
    <property type="project" value="TreeGrafter"/>
</dbReference>
<dbReference type="GO" id="GO:0042840">
    <property type="term" value="P:D-glucuronate catabolic process"/>
    <property type="evidence" value="ECO:0007669"/>
    <property type="project" value="TreeGrafter"/>
</dbReference>
<dbReference type="Gene3D" id="3.20.20.140">
    <property type="entry name" value="Metal-dependent hydrolases"/>
    <property type="match status" value="1"/>
</dbReference>
<dbReference type="Gene3D" id="1.10.2020.10">
    <property type="entry name" value="uronate isomerase, domain 2, chain A"/>
    <property type="match status" value="1"/>
</dbReference>
<dbReference type="HAMAP" id="MF_00675">
    <property type="entry name" value="UxaC"/>
    <property type="match status" value="1"/>
</dbReference>
<dbReference type="InterPro" id="IPR032466">
    <property type="entry name" value="Metal_Hydrolase"/>
</dbReference>
<dbReference type="InterPro" id="IPR003766">
    <property type="entry name" value="Uronate_isomerase"/>
</dbReference>
<dbReference type="NCBIfam" id="NF002794">
    <property type="entry name" value="PRK02925.1"/>
    <property type="match status" value="1"/>
</dbReference>
<dbReference type="PANTHER" id="PTHR30068">
    <property type="entry name" value="URONATE ISOMERASE"/>
    <property type="match status" value="1"/>
</dbReference>
<dbReference type="PANTHER" id="PTHR30068:SF4">
    <property type="entry name" value="URONATE ISOMERASE"/>
    <property type="match status" value="1"/>
</dbReference>
<dbReference type="Pfam" id="PF02614">
    <property type="entry name" value="UxaC"/>
    <property type="match status" value="1"/>
</dbReference>
<dbReference type="SUPFAM" id="SSF51556">
    <property type="entry name" value="Metallo-dependent hydrolases"/>
    <property type="match status" value="1"/>
</dbReference>
<feature type="chain" id="PRO_0000172757" description="Uronate isomerase">
    <location>
        <begin position="1"/>
        <end position="468"/>
    </location>
</feature>
<proteinExistence type="inferred from homology"/>
<evidence type="ECO:0000255" key="1">
    <source>
        <dbReference type="HAMAP-Rule" id="MF_00675"/>
    </source>
</evidence>
<protein>
    <recommendedName>
        <fullName evidence="1">Uronate isomerase</fullName>
        <ecNumber evidence="1">5.3.1.12</ecNumber>
    </recommendedName>
    <alternativeName>
        <fullName evidence="1">Glucuronate isomerase</fullName>
    </alternativeName>
    <alternativeName>
        <fullName evidence="1">Uronic isomerase</fullName>
    </alternativeName>
</protein>